<protein>
    <recommendedName>
        <fullName>Uncharacterized protein EGAP4.1</fullName>
    </recommendedName>
</protein>
<feature type="signal peptide" evidence="1">
    <location>
        <begin position="1"/>
        <end position="22"/>
    </location>
</feature>
<feature type="chain" id="PRO_0000250573" description="Uncharacterized protein EGAP4.1">
    <location>
        <begin position="23"/>
        <end position="113"/>
    </location>
</feature>
<feature type="glycosylation site" description="N-linked (GlcNAc...) asparagine" evidence="2 3">
    <location>
        <position position="47"/>
    </location>
</feature>
<gene>
    <name type="ORF">EGAP4.1</name>
</gene>
<accession>Q19077</accession>
<name>YEGP4_CAEEL</name>
<keyword id="KW-0325">Glycoprotein</keyword>
<keyword id="KW-1185">Reference proteome</keyword>
<keyword id="KW-0964">Secreted</keyword>
<keyword id="KW-0732">Signal</keyword>
<evidence type="ECO:0000255" key="1"/>
<evidence type="ECO:0000269" key="2">
    <source>
    </source>
</evidence>
<evidence type="ECO:0000269" key="3">
    <source>
    </source>
</evidence>
<evidence type="ECO:0000305" key="4"/>
<sequence length="113" mass="12722">MCRFPTFLLIAIAITMLPTILSITCFVGKNSVVAEEKDFDYCATMKNISTKEITYSGRTGATRVFEKDANDLTINNCYIDFNDQTALTCYCRRSKCNKVVSSLQFDLMTIATK</sequence>
<comment type="subcellular location">
    <subcellularLocation>
        <location evidence="4">Secreted</location>
    </subcellularLocation>
</comment>
<dbReference type="EMBL" id="FO081046">
    <property type="protein sequence ID" value="CCD68790.1"/>
    <property type="molecule type" value="Genomic_DNA"/>
</dbReference>
<dbReference type="PIR" id="T15934">
    <property type="entry name" value="T15934"/>
</dbReference>
<dbReference type="RefSeq" id="NP_509480.1">
    <property type="nucleotide sequence ID" value="NM_077079.5"/>
</dbReference>
<dbReference type="FunCoup" id="Q19077">
    <property type="interactions" value="105"/>
</dbReference>
<dbReference type="iPTMnet" id="Q19077"/>
<dbReference type="PaxDb" id="6239-EGAP4.1"/>
<dbReference type="EnsemblMetazoa" id="EGAP4.1.1">
    <property type="protein sequence ID" value="EGAP4.1.1"/>
    <property type="gene ID" value="WBGene00017149"/>
</dbReference>
<dbReference type="GeneID" id="184049"/>
<dbReference type="KEGG" id="cel:CELE_EGAP4.1"/>
<dbReference type="UCSC" id="EGAP4.1">
    <property type="organism name" value="c. elegans"/>
</dbReference>
<dbReference type="AGR" id="WB:WBGene00017149"/>
<dbReference type="CTD" id="184049"/>
<dbReference type="WormBase" id="EGAP4.1">
    <property type="protein sequence ID" value="CE07012"/>
    <property type="gene ID" value="WBGene00017149"/>
</dbReference>
<dbReference type="eggNOG" id="ENOG502T3K0">
    <property type="taxonomic scope" value="Eukaryota"/>
</dbReference>
<dbReference type="GeneTree" id="ENSGT00970000197069"/>
<dbReference type="HOGENOM" id="CLU_2086987_0_0_1"/>
<dbReference type="InParanoid" id="Q19077"/>
<dbReference type="OMA" id="ICKTEMV"/>
<dbReference type="PhylomeDB" id="Q19077"/>
<dbReference type="PRO" id="PR:Q19077"/>
<dbReference type="Proteomes" id="UP000001940">
    <property type="component" value="Chromosome X"/>
</dbReference>
<dbReference type="Bgee" id="WBGene00017149">
    <property type="expression patterns" value="Expressed in larva and 3 other cell types or tissues"/>
</dbReference>
<dbReference type="GO" id="GO:0005576">
    <property type="term" value="C:extracellular region"/>
    <property type="evidence" value="ECO:0007669"/>
    <property type="project" value="UniProtKB-SubCell"/>
</dbReference>
<reference key="1">
    <citation type="journal article" date="1998" name="Science">
        <title>Genome sequence of the nematode C. elegans: a platform for investigating biology.</title>
        <authorList>
            <consortium name="The C. elegans sequencing consortium"/>
        </authorList>
    </citation>
    <scope>NUCLEOTIDE SEQUENCE [LARGE SCALE GENOMIC DNA]</scope>
    <source>
        <strain>Bristol N2</strain>
    </source>
</reference>
<reference key="2">
    <citation type="journal article" date="2003" name="Nat. Biotechnol.">
        <title>Lectin affinity capture, isotope-coded tagging and mass spectrometry to identify N-linked glycoproteins.</title>
        <authorList>
            <person name="Kaji H."/>
            <person name="Saito H."/>
            <person name="Yamauchi Y."/>
            <person name="Shinkawa T."/>
            <person name="Taoka M."/>
            <person name="Hirabayashi J."/>
            <person name="Kasai K."/>
            <person name="Takahashi N."/>
            <person name="Isobe T."/>
        </authorList>
    </citation>
    <scope>GLYCOSYLATION [LARGE SCALE ANALYSIS] AT ASN-47</scope>
    <scope>IDENTIFICATION BY MASS SPECTROMETRY</scope>
    <source>
        <strain>Bristol N2</strain>
    </source>
</reference>
<reference key="3">
    <citation type="journal article" date="2007" name="Mol. Cell. Proteomics">
        <title>Proteomics reveals N-linked glycoprotein diversity in Caenorhabditis elegans and suggests an atypical translocation mechanism for integral membrane proteins.</title>
        <authorList>
            <person name="Kaji H."/>
            <person name="Kamiie J."/>
            <person name="Kawakami H."/>
            <person name="Kido K."/>
            <person name="Yamauchi Y."/>
            <person name="Shinkawa T."/>
            <person name="Taoka M."/>
            <person name="Takahashi N."/>
            <person name="Isobe T."/>
        </authorList>
    </citation>
    <scope>GLYCOSYLATION [LARGE SCALE ANALYSIS] AT ASN-47</scope>
    <scope>IDENTIFICATION BY MASS SPECTROMETRY</scope>
    <source>
        <strain>Bristol N2</strain>
    </source>
</reference>
<organism>
    <name type="scientific">Caenorhabditis elegans</name>
    <dbReference type="NCBI Taxonomy" id="6239"/>
    <lineage>
        <taxon>Eukaryota</taxon>
        <taxon>Metazoa</taxon>
        <taxon>Ecdysozoa</taxon>
        <taxon>Nematoda</taxon>
        <taxon>Chromadorea</taxon>
        <taxon>Rhabditida</taxon>
        <taxon>Rhabditina</taxon>
        <taxon>Rhabditomorpha</taxon>
        <taxon>Rhabditoidea</taxon>
        <taxon>Rhabditidae</taxon>
        <taxon>Peloderinae</taxon>
        <taxon>Caenorhabditis</taxon>
    </lineage>
</organism>
<proteinExistence type="evidence at protein level"/>